<dbReference type="EC" id="3.2.1.80" evidence="5 6 7"/>
<dbReference type="EMBL" id="CH408157">
    <property type="protein sequence ID" value="EDK38679.2"/>
    <property type="molecule type" value="Genomic_DNA"/>
</dbReference>
<dbReference type="RefSeq" id="XP_001485048.2">
    <property type="nucleotide sequence ID" value="XM_001484998.1"/>
</dbReference>
<dbReference type="SMR" id="A5DHM6"/>
<dbReference type="FunCoup" id="A5DHM6">
    <property type="interactions" value="436"/>
</dbReference>
<dbReference type="STRING" id="294746.A5DHM6"/>
<dbReference type="CAZy" id="GH32">
    <property type="family name" value="Glycoside Hydrolase Family 32"/>
</dbReference>
<dbReference type="GeneID" id="5127324"/>
<dbReference type="KEGG" id="pgu:PGUG_02777"/>
<dbReference type="VEuPathDB" id="FungiDB:PGUG_02777"/>
<dbReference type="eggNOG" id="KOG0228">
    <property type="taxonomic scope" value="Eukaryota"/>
</dbReference>
<dbReference type="HOGENOM" id="CLU_001528_3_3_1"/>
<dbReference type="InParanoid" id="A5DHM6"/>
<dbReference type="OMA" id="GTEWRHA"/>
<dbReference type="OrthoDB" id="202537at2759"/>
<dbReference type="BRENDA" id="3.2.1.7">
    <property type="organism ID" value="1115"/>
</dbReference>
<dbReference type="Proteomes" id="UP000001997">
    <property type="component" value="Unassembled WGS sequence"/>
</dbReference>
<dbReference type="GO" id="GO:0005576">
    <property type="term" value="C:extracellular region"/>
    <property type="evidence" value="ECO:0007669"/>
    <property type="project" value="UniProtKB-SubCell"/>
</dbReference>
<dbReference type="GO" id="GO:0000324">
    <property type="term" value="C:fungal-type vacuole"/>
    <property type="evidence" value="ECO:0007669"/>
    <property type="project" value="TreeGrafter"/>
</dbReference>
<dbReference type="GO" id="GO:0051669">
    <property type="term" value="F:fructan beta-fructosidase activity"/>
    <property type="evidence" value="ECO:0007669"/>
    <property type="project" value="UniProtKB-EC"/>
</dbReference>
<dbReference type="GO" id="GO:0051670">
    <property type="term" value="F:inulinase activity"/>
    <property type="evidence" value="ECO:0007669"/>
    <property type="project" value="EnsemblFungi"/>
</dbReference>
<dbReference type="GO" id="GO:0004575">
    <property type="term" value="F:sucrose alpha-glucosidase activity"/>
    <property type="evidence" value="ECO:0007669"/>
    <property type="project" value="TreeGrafter"/>
</dbReference>
<dbReference type="GO" id="GO:1902927">
    <property type="term" value="P:inulin catabolic process"/>
    <property type="evidence" value="ECO:0007669"/>
    <property type="project" value="EnsemblFungi"/>
</dbReference>
<dbReference type="GO" id="GO:0034484">
    <property type="term" value="P:raffinose catabolic process"/>
    <property type="evidence" value="ECO:0007669"/>
    <property type="project" value="EnsemblFungi"/>
</dbReference>
<dbReference type="GO" id="GO:0005987">
    <property type="term" value="P:sucrose catabolic process"/>
    <property type="evidence" value="ECO:0007669"/>
    <property type="project" value="EnsemblFungi"/>
</dbReference>
<dbReference type="CDD" id="cd18622">
    <property type="entry name" value="GH32_Inu-like"/>
    <property type="match status" value="1"/>
</dbReference>
<dbReference type="FunFam" id="2.115.10.20:FF:000002">
    <property type="entry name" value="Invertase 2"/>
    <property type="match status" value="1"/>
</dbReference>
<dbReference type="Gene3D" id="2.60.120.560">
    <property type="entry name" value="Exo-inulinase, domain 1"/>
    <property type="match status" value="1"/>
</dbReference>
<dbReference type="Gene3D" id="2.115.10.20">
    <property type="entry name" value="Glycosyl hydrolase domain, family 43"/>
    <property type="match status" value="1"/>
</dbReference>
<dbReference type="InterPro" id="IPR013320">
    <property type="entry name" value="ConA-like_dom_sf"/>
</dbReference>
<dbReference type="InterPro" id="IPR001362">
    <property type="entry name" value="Glyco_hydro_32"/>
</dbReference>
<dbReference type="InterPro" id="IPR013189">
    <property type="entry name" value="Glyco_hydro_32_C"/>
</dbReference>
<dbReference type="InterPro" id="IPR013148">
    <property type="entry name" value="Glyco_hydro_32_N"/>
</dbReference>
<dbReference type="InterPro" id="IPR023296">
    <property type="entry name" value="Glyco_hydro_beta-prop_sf"/>
</dbReference>
<dbReference type="PANTHER" id="PTHR42800">
    <property type="entry name" value="EXOINULINASE INUD (AFU_ORTHOLOGUE AFUA_5G00480)"/>
    <property type="match status" value="1"/>
</dbReference>
<dbReference type="PANTHER" id="PTHR42800:SF4">
    <property type="entry name" value="INVERTASE 2"/>
    <property type="match status" value="1"/>
</dbReference>
<dbReference type="Pfam" id="PF08244">
    <property type="entry name" value="Glyco_hydro_32C"/>
    <property type="match status" value="1"/>
</dbReference>
<dbReference type="Pfam" id="PF00251">
    <property type="entry name" value="Glyco_hydro_32N"/>
    <property type="match status" value="1"/>
</dbReference>
<dbReference type="SMART" id="SM00640">
    <property type="entry name" value="Glyco_32"/>
    <property type="match status" value="1"/>
</dbReference>
<dbReference type="SUPFAM" id="SSF75005">
    <property type="entry name" value="Arabinanase/levansucrase/invertase"/>
    <property type="match status" value="1"/>
</dbReference>
<dbReference type="SUPFAM" id="SSF49899">
    <property type="entry name" value="Concanavalin A-like lectins/glucanases"/>
    <property type="match status" value="1"/>
</dbReference>
<sequence length="514" mass="57859">MRAFLALIFLTFVMNVESSRPLMAFTPSHGWMNDPNGQFYDSKNELWHLYYQYNPNDTVWGTPLYWGHATSKDLSTWKDYGATIGPDRDEDGIFSGNIVVDHNNTSGFFNDSIDPRQRVVAIYTYNTEGSQTQHVAYSLDGGYTFEKYEHNPVLDVDNINFRDPKVFWHEPTNQWIMVIALSQQFKIQIYGSIDLTNWSLHSNFTGGLFGFQYECPGLIEVPVEGTDESKWVMFIAINPGSPLGGSSNQYFIGSFDGFEFVPDDSQARLMDYGKDFYAFQTFDNAPKESGVVGLAWASNWQYANLAPTKEWRSSMTLARQMTLASRNMNPETKVLSLLQKPIFGESVVAANKISKRNITGQDEQAVKIHKNSTGTFSFDITFSVDSSKNQTGQLQVISGQNGESIRAGFDPTAGQFFVDRGNTSGLKENPFFTDKTSAYVEPWKHQNDLPVYKMFGVIDGNLIEVFLNDGIATLTNTFFIPGTEGLEYLEIESSSDAIHIVESEVKELKLRATS</sequence>
<feature type="signal peptide" evidence="2">
    <location>
        <begin position="1"/>
        <end position="18"/>
    </location>
</feature>
<feature type="chain" id="PRO_0000432723" description="Extracellular exo-inulinase" evidence="2">
    <location>
        <begin position="19"/>
        <end position="514"/>
    </location>
</feature>
<feature type="active site" description="Nucleophile" evidence="4">
    <location>
        <position position="34"/>
    </location>
</feature>
<feature type="active site" description="Proton donor/acceptor" evidence="4">
    <location>
        <position position="214"/>
    </location>
</feature>
<feature type="binding site" evidence="1">
    <location>
        <begin position="33"/>
        <end position="34"/>
    </location>
    <ligand>
        <name>substrate</name>
    </ligand>
</feature>
<feature type="binding site" evidence="1">
    <location>
        <position position="52"/>
    </location>
    <ligand>
        <name>substrate</name>
    </ligand>
</feature>
<feature type="binding site" evidence="1">
    <location>
        <position position="60"/>
    </location>
    <ligand>
        <name>substrate</name>
    </ligand>
</feature>
<feature type="binding site" evidence="1">
    <location>
        <position position="95"/>
    </location>
    <ligand>
        <name>substrate</name>
    </ligand>
</feature>
<feature type="binding site" evidence="1">
    <location>
        <begin position="162"/>
        <end position="163"/>
    </location>
    <ligand>
        <name>substrate</name>
    </ligand>
</feature>
<feature type="binding site" evidence="1">
    <location>
        <position position="214"/>
    </location>
    <ligand>
        <name>substrate</name>
    </ligand>
</feature>
<feature type="binding site" evidence="1">
    <location>
        <position position="300"/>
    </location>
    <ligand>
        <name>substrate</name>
    </ligand>
</feature>
<feature type="glycosylation site" description="N-linked (GlcNAc...) asparagine" evidence="3">
    <location>
        <position position="56"/>
    </location>
</feature>
<feature type="glycosylation site" description="N-linked (GlcNAc...) asparagine" evidence="3">
    <location>
        <position position="104"/>
    </location>
</feature>
<feature type="glycosylation site" description="N-linked (GlcNAc...) asparagine" evidence="3">
    <location>
        <position position="110"/>
    </location>
</feature>
<feature type="glycosylation site" description="N-linked (GlcNAc...) asparagine" evidence="3">
    <location>
        <position position="197"/>
    </location>
</feature>
<feature type="glycosylation site" description="N-linked (GlcNAc...) asparagine" evidence="3">
    <location>
        <position position="203"/>
    </location>
</feature>
<feature type="glycosylation site" description="N-linked (GlcNAc...) asparagine" evidence="3">
    <location>
        <position position="357"/>
    </location>
</feature>
<feature type="glycosylation site" description="N-linked (GlcNAc...) asparagine" evidence="3">
    <location>
        <position position="371"/>
    </location>
</feature>
<feature type="glycosylation site" description="N-linked (GlcNAc...) asparagine" evidence="3">
    <location>
        <position position="389"/>
    </location>
</feature>
<feature type="glycosylation site" description="N-linked (GlcNAc...) asparagine" evidence="3">
    <location>
        <position position="422"/>
    </location>
</feature>
<comment type="function">
    <text evidence="5 6 7">Exo-inulinase involved in utilization of the plant storage polymer inulin, consisting of fructooligosaccharides with a degree of polymerization (DP) value from 2 to 60. Splits off terminal fructose units successively from the non-reducing end of the inulin molecule.</text>
</comment>
<comment type="catalytic activity">
    <reaction evidence="5 6 7">
        <text>Hydrolysis of terminal, non-reducing (2-&gt;1)- and (2-&gt;6)-linked beta-D-fructofuranose residues in fructans.</text>
        <dbReference type="EC" id="3.2.1.80"/>
    </reaction>
</comment>
<comment type="biophysicochemical properties">
    <phDependence>
        <text evidence="5">Optimum pH is 6.0.</text>
    </phDependence>
    <temperatureDependence>
        <text evidence="5">Optimum temperature is 60 degrees Celsius.</text>
    </temperatureDependence>
</comment>
<comment type="subcellular location">
    <subcellularLocation>
        <location evidence="10 11 12">Secreted</location>
    </subcellularLocation>
</comment>
<comment type="induction">
    <text evidence="5">Expression is up-regulated by inulin and maltose, and repressed by glucose. Ammonium sulfate, ammonium chloride and urea are inhibitory for inulinase synthesis, presumably because of the release of ammonium ions.</text>
</comment>
<comment type="similarity">
    <text evidence="9">Belongs to the glycosyl hydrolase 32 family.</text>
</comment>
<protein>
    <recommendedName>
        <fullName evidence="8">Extracellular exo-inulinase</fullName>
        <ecNumber evidence="5 6 7">3.2.1.80</ecNumber>
    </recommendedName>
</protein>
<gene>
    <name type="ORF">PGUG_02777</name>
</gene>
<accession>A5DHM6</accession>
<keyword id="KW-0119">Carbohydrate metabolism</keyword>
<keyword id="KW-0325">Glycoprotein</keyword>
<keyword id="KW-0326">Glycosidase</keyword>
<keyword id="KW-0378">Hydrolase</keyword>
<keyword id="KW-0624">Polysaccharide degradation</keyword>
<keyword id="KW-1185">Reference proteome</keyword>
<keyword id="KW-0964">Secreted</keyword>
<keyword id="KW-0732">Signal</keyword>
<reference key="1">
    <citation type="journal article" date="2009" name="Nature">
        <title>Evolution of pathogenicity and sexual reproduction in eight Candida genomes.</title>
        <authorList>
            <person name="Butler G."/>
            <person name="Rasmussen M.D."/>
            <person name="Lin M.F."/>
            <person name="Santos M.A.S."/>
            <person name="Sakthikumar S."/>
            <person name="Munro C.A."/>
            <person name="Rheinbay E."/>
            <person name="Grabherr M."/>
            <person name="Forche A."/>
            <person name="Reedy J.L."/>
            <person name="Agrafioti I."/>
            <person name="Arnaud M.B."/>
            <person name="Bates S."/>
            <person name="Brown A.J.P."/>
            <person name="Brunke S."/>
            <person name="Costanzo M.C."/>
            <person name="Fitzpatrick D.A."/>
            <person name="de Groot P.W.J."/>
            <person name="Harris D."/>
            <person name="Hoyer L.L."/>
            <person name="Hube B."/>
            <person name="Klis F.M."/>
            <person name="Kodira C."/>
            <person name="Lennard N."/>
            <person name="Logue M.E."/>
            <person name="Martin R."/>
            <person name="Neiman A.M."/>
            <person name="Nikolaou E."/>
            <person name="Quail M.A."/>
            <person name="Quinn J."/>
            <person name="Santos M.C."/>
            <person name="Schmitzberger F.F."/>
            <person name="Sherlock G."/>
            <person name="Shah P."/>
            <person name="Silverstein K.A.T."/>
            <person name="Skrzypek M.S."/>
            <person name="Soll D."/>
            <person name="Staggs R."/>
            <person name="Stansfield I."/>
            <person name="Stumpf M.P.H."/>
            <person name="Sudbery P.E."/>
            <person name="Srikantha T."/>
            <person name="Zeng Q."/>
            <person name="Berman J."/>
            <person name="Berriman M."/>
            <person name="Heitman J."/>
            <person name="Gow N.A.R."/>
            <person name="Lorenz M.C."/>
            <person name="Birren B.W."/>
            <person name="Kellis M."/>
            <person name="Cuomo C.A."/>
        </authorList>
    </citation>
    <scope>NUCLEOTIDE SEQUENCE [LARGE SCALE GENOMIC DNA]</scope>
    <source>
        <strain>ATCC 6260 / CBS 566 / DSM 6381 / JCM 1539 / NBRC 10279 / NRRL Y-324</strain>
    </source>
</reference>
<reference key="2">
    <citation type="journal article" date="2007" name="J. Ind. Microbiol. Biotechnol.">
        <title>Inulinase production by a marine yeast Pichia guilliermondii and inulin hydrolysis by the crude inulinase.</title>
        <authorList>
            <person name="Gong F."/>
            <person name="Sheng J."/>
            <person name="Chi Z."/>
            <person name="Li J."/>
        </authorList>
    </citation>
    <scope>FUNCTION</scope>
    <scope>CATALYTIC ACTIVITY</scope>
    <scope>BIOPHYSICOCHEMICAL PROPERTIES</scope>
    <scope>INDUCTION</scope>
</reference>
<reference key="3">
    <citation type="journal article" date="2009" name="Biochem. Eng. J.">
        <title>Inulinase overproduction by a mutant of the marine yeast Pichia guilliermondii using surface response methodology and inulin hydrolysis.</title>
        <authorList>
            <person name="Yu X."/>
            <person name="Guo N."/>
            <person name="Chi Z."/>
            <person name="Gong F."/>
            <person name="Sheng J."/>
            <person name="Chi Z."/>
        </authorList>
    </citation>
    <scope>FUNCTION</scope>
    <scope>CATALYTIC ACTIVITY</scope>
</reference>
<reference key="4">
    <citation type="journal article" date="2009" name="J. Ind. Microbiol. Biotechnol.">
        <title>Enhanced inulinase production in solid state fermentation by a mutant of the marine yeast Pichia guilliermondii using surface response methodology and inulin hydrolysis.</title>
        <authorList>
            <person name="Guo N."/>
            <person name="Gong F."/>
            <person name="Chi Z."/>
            <person name="Sheng J."/>
            <person name="Li J."/>
        </authorList>
    </citation>
    <scope>FUNCTION</scope>
    <scope>CATALYTIC ACTIVITY</scope>
</reference>
<evidence type="ECO:0000250" key="1">
    <source>
        <dbReference type="UniProtKB" id="Q96TU3"/>
    </source>
</evidence>
<evidence type="ECO:0000255" key="2"/>
<evidence type="ECO:0000255" key="3">
    <source>
        <dbReference type="PROSITE-ProRule" id="PRU00498"/>
    </source>
</evidence>
<evidence type="ECO:0000255" key="4">
    <source>
        <dbReference type="PROSITE-ProRule" id="PRU10067"/>
    </source>
</evidence>
<evidence type="ECO:0000269" key="5">
    <source>
    </source>
</evidence>
<evidence type="ECO:0000269" key="6">
    <source>
    </source>
</evidence>
<evidence type="ECO:0000269" key="7">
    <source ref="3"/>
</evidence>
<evidence type="ECO:0000303" key="8">
    <source>
    </source>
</evidence>
<evidence type="ECO:0000305" key="9"/>
<evidence type="ECO:0000305" key="10">
    <source>
    </source>
</evidence>
<evidence type="ECO:0000305" key="11">
    <source>
    </source>
</evidence>
<evidence type="ECO:0000305" key="12">
    <source ref="3"/>
</evidence>
<organism>
    <name type="scientific">Meyerozyma guilliermondii (strain ATCC 6260 / CBS 566 / DSM 6381 / JCM 1539 / NBRC 10279 / NRRL Y-324)</name>
    <name type="common">Yeast</name>
    <name type="synonym">Candida guilliermondii</name>
    <dbReference type="NCBI Taxonomy" id="294746"/>
    <lineage>
        <taxon>Eukaryota</taxon>
        <taxon>Fungi</taxon>
        <taxon>Dikarya</taxon>
        <taxon>Ascomycota</taxon>
        <taxon>Saccharomycotina</taxon>
        <taxon>Pichiomycetes</taxon>
        <taxon>Debaryomycetaceae</taxon>
        <taxon>Meyerozyma</taxon>
    </lineage>
</organism>
<name>INUE_PICGU</name>
<proteinExistence type="evidence at protein level"/>